<dbReference type="EMBL" id="BA000033">
    <property type="protein sequence ID" value="BAB96450.1"/>
    <property type="molecule type" value="Genomic_DNA"/>
</dbReference>
<dbReference type="RefSeq" id="WP_000653261.1">
    <property type="nucleotide sequence ID" value="NC_003923.1"/>
</dbReference>
<dbReference type="SMR" id="Q79ZV4"/>
<dbReference type="KEGG" id="sam:MW2585"/>
<dbReference type="HOGENOM" id="CLU_124987_0_0_9"/>
<dbReference type="GO" id="GO:0003677">
    <property type="term" value="F:DNA binding"/>
    <property type="evidence" value="ECO:0007669"/>
    <property type="project" value="UniProtKB-KW"/>
</dbReference>
<dbReference type="Gene3D" id="1.10.357.10">
    <property type="entry name" value="Tetracycline Repressor, domain 2"/>
    <property type="match status" value="1"/>
</dbReference>
<dbReference type="InterPro" id="IPR009057">
    <property type="entry name" value="Homeodomain-like_sf"/>
</dbReference>
<dbReference type="InterPro" id="IPR050624">
    <property type="entry name" value="HTH-type_Tx_Regulator"/>
</dbReference>
<dbReference type="InterPro" id="IPR001647">
    <property type="entry name" value="HTH_TetR"/>
</dbReference>
<dbReference type="InterPro" id="IPR041646">
    <property type="entry name" value="IcaR_C"/>
</dbReference>
<dbReference type="PANTHER" id="PTHR43479">
    <property type="entry name" value="ACREF/ENVCD OPERON REPRESSOR-RELATED"/>
    <property type="match status" value="1"/>
</dbReference>
<dbReference type="PANTHER" id="PTHR43479:SF11">
    <property type="entry name" value="ACREF_ENVCD OPERON REPRESSOR-RELATED"/>
    <property type="match status" value="1"/>
</dbReference>
<dbReference type="Pfam" id="PF18665">
    <property type="entry name" value="TetR_C_37"/>
    <property type="match status" value="1"/>
</dbReference>
<dbReference type="Pfam" id="PF00440">
    <property type="entry name" value="TetR_N"/>
    <property type="match status" value="1"/>
</dbReference>
<dbReference type="PRINTS" id="PR00455">
    <property type="entry name" value="HTHTETR"/>
</dbReference>
<dbReference type="SUPFAM" id="SSF46689">
    <property type="entry name" value="Homeodomain-like"/>
    <property type="match status" value="1"/>
</dbReference>
<dbReference type="PROSITE" id="PS50977">
    <property type="entry name" value="HTH_TETR_2"/>
    <property type="match status" value="1"/>
</dbReference>
<name>ICAR_STAAW</name>
<proteinExistence type="inferred from homology"/>
<accession>Q79ZV4</accession>
<organism>
    <name type="scientific">Staphylococcus aureus (strain MW2)</name>
    <dbReference type="NCBI Taxonomy" id="196620"/>
    <lineage>
        <taxon>Bacteria</taxon>
        <taxon>Bacillati</taxon>
        <taxon>Bacillota</taxon>
        <taxon>Bacilli</taxon>
        <taxon>Bacillales</taxon>
        <taxon>Staphylococcaceae</taxon>
        <taxon>Staphylococcus</taxon>
    </lineage>
</organism>
<reference key="1">
    <citation type="journal article" date="2002" name="Lancet">
        <title>Genome and virulence determinants of high virulence community-acquired MRSA.</title>
        <authorList>
            <person name="Baba T."/>
            <person name="Takeuchi F."/>
            <person name="Kuroda M."/>
            <person name="Yuzawa H."/>
            <person name="Aoki K."/>
            <person name="Oguchi A."/>
            <person name="Nagai Y."/>
            <person name="Iwama N."/>
            <person name="Asano K."/>
            <person name="Naimi T."/>
            <person name="Kuroda H."/>
            <person name="Cui L."/>
            <person name="Yamamoto K."/>
            <person name="Hiramatsu K."/>
        </authorList>
    </citation>
    <scope>NUCLEOTIDE SEQUENCE [LARGE SCALE GENOMIC DNA]</scope>
    <source>
        <strain>MW2</strain>
    </source>
</reference>
<keyword id="KW-0238">DNA-binding</keyword>
<keyword id="KW-0678">Repressor</keyword>
<keyword id="KW-0804">Transcription</keyword>
<keyword id="KW-0805">Transcription regulation</keyword>
<comment type="function">
    <text evidence="1">Represses transcription of the icaADBC operon necessary for biofilm production.</text>
</comment>
<comment type="subunit">
    <text evidence="1">Homodimer.</text>
</comment>
<comment type="miscellaneous">
    <text evidence="1">Binding to the ica operator DNA involves two IcaR dimers and is highly cooperative.</text>
</comment>
<feature type="chain" id="PRO_0000070602" description="Biofilm operon icaADBC HTH-type negative transcriptional regulator IcaR">
    <location>
        <begin position="1"/>
        <end position="186"/>
    </location>
</feature>
<feature type="domain" description="HTH tetR-type" evidence="2">
    <location>
        <begin position="1"/>
        <end position="59"/>
    </location>
</feature>
<feature type="DNA-binding region" description="H-T-H motif" evidence="2">
    <location>
        <begin position="22"/>
        <end position="41"/>
    </location>
</feature>
<protein>
    <recommendedName>
        <fullName>Biofilm operon icaADBC HTH-type negative transcriptional regulator IcaR</fullName>
    </recommendedName>
    <alternativeName>
        <fullName>Intercellular adhesion protein R</fullName>
    </alternativeName>
</protein>
<gene>
    <name type="primary">icaR</name>
    <name type="ordered locus">MW2585</name>
</gene>
<sequence>MKDKIIDNAITLFSEKGYDGTTLDDIAKSVNIKKASLYYHFDSKKSIYEQSVKCCFDYLNNIIMMNQNKSNYSIDALYQFLFEFIFDIEERYIRMYVQLSNTPEEFSGNIYGQIQDLNQSLSKEIAKFYDESKIKMTKEDFQNLILLFLESWYLKASFSQKFGAVEESKSQFKDEVYSLLNIFLKK</sequence>
<evidence type="ECO:0000250" key="1"/>
<evidence type="ECO:0000255" key="2">
    <source>
        <dbReference type="PROSITE-ProRule" id="PRU00335"/>
    </source>
</evidence>